<keyword id="KW-0046">Antibiotic resistance</keyword>
<keyword id="KW-0998">Cell outer membrane</keyword>
<keyword id="KW-0449">Lipoprotein</keyword>
<keyword id="KW-0472">Membrane</keyword>
<keyword id="KW-0564">Palmitate</keyword>
<keyword id="KW-1185">Reference proteome</keyword>
<keyword id="KW-0732">Signal</keyword>
<keyword id="KW-0812">Transmembrane</keyword>
<keyword id="KW-1134">Transmembrane beta strand</keyword>
<name>MDTQ_ECO57</name>
<dbReference type="EMBL" id="AE005174">
    <property type="protein sequence ID" value="AAG57270.2"/>
    <property type="status" value="ALT_INIT"/>
    <property type="molecule type" value="Genomic_DNA"/>
</dbReference>
<dbReference type="EMBL" id="BA000007">
    <property type="protein sequence ID" value="BAB36448.1"/>
    <property type="status" value="ALT_INIT"/>
    <property type="molecule type" value="Genomic_DNA"/>
</dbReference>
<dbReference type="PIR" id="A98007">
    <property type="entry name" value="A98007"/>
</dbReference>
<dbReference type="PIR" id="B85851">
    <property type="entry name" value="B85851"/>
</dbReference>
<dbReference type="RefSeq" id="NP_311052.2">
    <property type="nucleotide sequence ID" value="NC_002695.1"/>
</dbReference>
<dbReference type="RefSeq" id="WP_001078131.1">
    <property type="nucleotide sequence ID" value="NZ_VOAI01000001.1"/>
</dbReference>
<dbReference type="SMR" id="Q8X659"/>
<dbReference type="STRING" id="155864.Z3387"/>
<dbReference type="GeneID" id="916729"/>
<dbReference type="KEGG" id="ece:Z3387"/>
<dbReference type="KEGG" id="ecs:ECs_3025"/>
<dbReference type="PATRIC" id="fig|386585.9.peg.3150"/>
<dbReference type="eggNOG" id="COG1538">
    <property type="taxonomic scope" value="Bacteria"/>
</dbReference>
<dbReference type="HOGENOM" id="CLU_012817_6_3_6"/>
<dbReference type="OMA" id="DQFYGPG"/>
<dbReference type="Proteomes" id="UP000000558">
    <property type="component" value="Chromosome"/>
</dbReference>
<dbReference type="Proteomes" id="UP000002519">
    <property type="component" value="Chromosome"/>
</dbReference>
<dbReference type="GO" id="GO:0009279">
    <property type="term" value="C:cell outer membrane"/>
    <property type="evidence" value="ECO:0007669"/>
    <property type="project" value="UniProtKB-SubCell"/>
</dbReference>
<dbReference type="GO" id="GO:0015562">
    <property type="term" value="F:efflux transmembrane transporter activity"/>
    <property type="evidence" value="ECO:0007669"/>
    <property type="project" value="InterPro"/>
</dbReference>
<dbReference type="GO" id="GO:0046677">
    <property type="term" value="P:response to antibiotic"/>
    <property type="evidence" value="ECO:0007669"/>
    <property type="project" value="UniProtKB-KW"/>
</dbReference>
<dbReference type="Gene3D" id="1.20.1600.10">
    <property type="entry name" value="Outer membrane efflux proteins (OEP)"/>
    <property type="match status" value="1"/>
</dbReference>
<dbReference type="Gene3D" id="2.20.200.10">
    <property type="entry name" value="Outer membrane efflux proteins (OEP)"/>
    <property type="match status" value="1"/>
</dbReference>
<dbReference type="InterPro" id="IPR050737">
    <property type="entry name" value="OMF"/>
</dbReference>
<dbReference type="InterPro" id="IPR003423">
    <property type="entry name" value="OMP_efflux"/>
</dbReference>
<dbReference type="InterPro" id="IPR010131">
    <property type="entry name" value="RND_efflux_OM_lipoprot_NodT"/>
</dbReference>
<dbReference type="NCBIfam" id="TIGR01845">
    <property type="entry name" value="outer_NodT"/>
    <property type="match status" value="1"/>
</dbReference>
<dbReference type="NCBIfam" id="NF008524">
    <property type="entry name" value="PRK11459.1"/>
    <property type="match status" value="1"/>
</dbReference>
<dbReference type="PANTHER" id="PTHR30203:SF20">
    <property type="entry name" value="MULTIDRUG RESISTANCE OUTER MEMBRANE PROTEIN MDTP-RELATED"/>
    <property type="match status" value="1"/>
</dbReference>
<dbReference type="PANTHER" id="PTHR30203">
    <property type="entry name" value="OUTER MEMBRANE CATION EFFLUX PROTEIN"/>
    <property type="match status" value="1"/>
</dbReference>
<dbReference type="Pfam" id="PF02321">
    <property type="entry name" value="OEP"/>
    <property type="match status" value="2"/>
</dbReference>
<dbReference type="SUPFAM" id="SSF56954">
    <property type="entry name" value="Outer membrane efflux proteins (OEP)"/>
    <property type="match status" value="1"/>
</dbReference>
<dbReference type="PROSITE" id="PS51257">
    <property type="entry name" value="PROKAR_LIPOPROTEIN"/>
    <property type="match status" value="1"/>
</dbReference>
<proteinExistence type="inferred from homology"/>
<gene>
    <name type="primary">mdtQ</name>
    <name type="ordered locus">Z3387</name>
    <name type="ordered locus">ECs3025</name>
</gene>
<reference key="1">
    <citation type="journal article" date="2001" name="Nature">
        <title>Genome sequence of enterohaemorrhagic Escherichia coli O157:H7.</title>
        <authorList>
            <person name="Perna N.T."/>
            <person name="Plunkett G. III"/>
            <person name="Burland V."/>
            <person name="Mau B."/>
            <person name="Glasner J.D."/>
            <person name="Rose D.J."/>
            <person name="Mayhew G.F."/>
            <person name="Evans P.S."/>
            <person name="Gregor J."/>
            <person name="Kirkpatrick H.A."/>
            <person name="Posfai G."/>
            <person name="Hackett J."/>
            <person name="Klink S."/>
            <person name="Boutin A."/>
            <person name="Shao Y."/>
            <person name="Miller L."/>
            <person name="Grotbeck E.J."/>
            <person name="Davis N.W."/>
            <person name="Lim A."/>
            <person name="Dimalanta E.T."/>
            <person name="Potamousis K."/>
            <person name="Apodaca J."/>
            <person name="Anantharaman T.S."/>
            <person name="Lin J."/>
            <person name="Yen G."/>
            <person name="Schwartz D.C."/>
            <person name="Welch R.A."/>
            <person name="Blattner F.R."/>
        </authorList>
    </citation>
    <scope>NUCLEOTIDE SEQUENCE [LARGE SCALE GENOMIC DNA]</scope>
    <source>
        <strain>O157:H7 / EDL933 / ATCC 700927 / EHEC</strain>
    </source>
</reference>
<reference key="2">
    <citation type="journal article" date="2001" name="DNA Res.">
        <title>Complete genome sequence of enterohemorrhagic Escherichia coli O157:H7 and genomic comparison with a laboratory strain K-12.</title>
        <authorList>
            <person name="Hayashi T."/>
            <person name="Makino K."/>
            <person name="Ohnishi M."/>
            <person name="Kurokawa K."/>
            <person name="Ishii K."/>
            <person name="Yokoyama K."/>
            <person name="Han C.-G."/>
            <person name="Ohtsubo E."/>
            <person name="Nakayama K."/>
            <person name="Murata T."/>
            <person name="Tanaka M."/>
            <person name="Tobe T."/>
            <person name="Iida T."/>
            <person name="Takami H."/>
            <person name="Honda T."/>
            <person name="Sasakawa C."/>
            <person name="Ogasawara N."/>
            <person name="Yasunaga T."/>
            <person name="Kuhara S."/>
            <person name="Shiba T."/>
            <person name="Hattori M."/>
            <person name="Shinagawa H."/>
        </authorList>
    </citation>
    <scope>NUCLEOTIDE SEQUENCE [LARGE SCALE GENOMIC DNA]</scope>
    <source>
        <strain>O157:H7 / Sakai / RIMD 0509952 / EHEC</strain>
    </source>
</reference>
<feature type="signal peptide" evidence="2">
    <location>
        <begin position="1"/>
        <end position="21"/>
    </location>
</feature>
<feature type="chain" id="PRO_0000031014" description="Multidrug resistance outer membrane protein MdtQ">
    <location>
        <begin position="22"/>
        <end position="478"/>
    </location>
</feature>
<feature type="lipid moiety-binding region" description="N-palmitoyl cysteine" evidence="2">
    <location>
        <position position="22"/>
    </location>
</feature>
<feature type="lipid moiety-binding region" description="S-diacylglycerol cysteine" evidence="2">
    <location>
        <position position="22"/>
    </location>
</feature>
<accession>Q8X659</accession>
<accession>Q7ACA2</accession>
<protein>
    <recommendedName>
        <fullName>Multidrug resistance outer membrane protein MdtQ</fullName>
    </recommendedName>
</protein>
<comment type="function">
    <text evidence="1">Could be involved in resistance to puromycin, acriflavine and tetraphenylarsonium chloride.</text>
</comment>
<comment type="subcellular location">
    <subcellularLocation>
        <location evidence="3">Cell outer membrane</location>
        <topology evidence="2">Lipid-anchor</topology>
    </subcellularLocation>
</comment>
<comment type="similarity">
    <text evidence="3">Belongs to the outer membrane factor (OMF) (TC 1.B.17) family.</text>
</comment>
<comment type="sequence caution" evidence="3">
    <conflict type="erroneous initiation">
        <sequence resource="EMBL-CDS" id="AAG57270"/>
    </conflict>
</comment>
<comment type="sequence caution" evidence="3">
    <conflict type="erroneous initiation">
        <sequence resource="EMBL-CDS" id="BAB36448"/>
    </conflict>
</comment>
<sequence>MNRDSFYPAIACFPLLLMLAGCAPMHETRQALSQQTPAAQVDTALPTALKNGWPDSQWWLEYHDNQLTSLINNALQNAPDMQVAEQRIQLAEAQAKAVATQDGPQIDFSADMERQKMSAEGLMGPFALNDPAAGTTGPWYTNGTFGLTAGWHLDIWGKNRAEVTARLGTVKARAAEREQTRQLLAGSVARLYWEWQTQAALNTVLQQIEKEQNTIIATDRQLYQNGITSSVEGVETDINASKTRQQLNDVAGKMKIIEARLIALTNHQTKSLTLKPVALPKVASQLPDELGYSLLARRADLQAAHWYVESSLSTIDAAKAAFYPDINLMAFLQQDALHLSDLFRHSAQQMGVTAGLTLPIFDSGRLNANLDIAKAESNLSIASYNKAVVEAVNDVARAASQVQTLAEKNQHQAQIERDALRVVGLAQARFNAGIIAGSRVSEARIPALRERANGLLLQGQWLDASIQLTGALGGGYKR</sequence>
<evidence type="ECO:0000250" key="1"/>
<evidence type="ECO:0000255" key="2">
    <source>
        <dbReference type="PROSITE-ProRule" id="PRU00303"/>
    </source>
</evidence>
<evidence type="ECO:0000305" key="3"/>
<organism>
    <name type="scientific">Escherichia coli O157:H7</name>
    <dbReference type="NCBI Taxonomy" id="83334"/>
    <lineage>
        <taxon>Bacteria</taxon>
        <taxon>Pseudomonadati</taxon>
        <taxon>Pseudomonadota</taxon>
        <taxon>Gammaproteobacteria</taxon>
        <taxon>Enterobacterales</taxon>
        <taxon>Enterobacteriaceae</taxon>
        <taxon>Escherichia</taxon>
    </lineage>
</organism>